<proteinExistence type="inferred from homology"/>
<reference key="1">
    <citation type="journal article" date="2005" name="Proc. Natl. Acad. Sci. U.S.A.">
        <title>The genome of the heartwater agent Ehrlichia ruminantium contains multiple tandem repeats of actively variable copy number.</title>
        <authorList>
            <person name="Collins N.E."/>
            <person name="Liebenberg J."/>
            <person name="de Villiers E.P."/>
            <person name="Brayton K.A."/>
            <person name="Louw E."/>
            <person name="Pretorius A."/>
            <person name="Faber F.E."/>
            <person name="van Heerden H."/>
            <person name="Josemans A."/>
            <person name="van Kleef M."/>
            <person name="Steyn H.C."/>
            <person name="van Strijp M.F."/>
            <person name="Zweygarth E."/>
            <person name="Jongejan F."/>
            <person name="Maillard J.C."/>
            <person name="Berthier D."/>
            <person name="Botha M."/>
            <person name="Joubert F."/>
            <person name="Corton C.H."/>
            <person name="Thomson N.R."/>
            <person name="Allsopp M.T."/>
            <person name="Allsopp B.A."/>
        </authorList>
    </citation>
    <scope>NUCLEOTIDE SEQUENCE [LARGE SCALE GENOMIC DNA]</scope>
    <source>
        <strain>Welgevonden</strain>
    </source>
</reference>
<reference key="2">
    <citation type="journal article" date="2006" name="J. Bacteriol.">
        <title>Comparative genomic analysis of three strains of Ehrlichia ruminantium reveals an active process of genome size plasticity.</title>
        <authorList>
            <person name="Frutos R."/>
            <person name="Viari A."/>
            <person name="Ferraz C."/>
            <person name="Morgat A."/>
            <person name="Eychenie S."/>
            <person name="Kandassamy Y."/>
            <person name="Chantal I."/>
            <person name="Bensaid A."/>
            <person name="Coissac E."/>
            <person name="Vachiery N."/>
            <person name="Demaille J."/>
            <person name="Martinez D."/>
        </authorList>
    </citation>
    <scope>NUCLEOTIDE SEQUENCE [LARGE SCALE GENOMIC DNA]</scope>
    <source>
        <strain>Welgevonden</strain>
    </source>
</reference>
<protein>
    <recommendedName>
        <fullName evidence="1">2,3-bisphosphoglycerate-independent phosphoglycerate mutase</fullName>
        <shortName evidence="1">BPG-independent PGAM</shortName>
        <shortName evidence="1">Phosphoglyceromutase</shortName>
        <shortName evidence="1">iPGM</shortName>
        <ecNumber evidence="1">5.4.2.12</ecNumber>
    </recommendedName>
</protein>
<sequence>MTNHSVILCILDGWGNNKNSQFNAIAQADTPYWDSIISQYPQSNIVTHGPDVGLPDRQIGNSEVGHISLGSGRIVLQDLCRINEEIKNIRKNTHLLEFTEQIKRNNGICHIAGLLSDGGIHSSLSHMLDIIDALSYLKIQVVIHIFLDGRDTPPISALKYINILCSHIKDLSNVSIATISGRYYSMDRDNRLDRTTKAYNSIAFGHGKRYEDPISAVQDNYNAGITDEFIIPCVIGNYQGMNPTDGFIMTNFRSDRVIQILKMITEDQNTNHITLKNTIGMIKYSNELNIPCLFPNKKISNTLGEIISNQQLHQLRIAETEKYAHVTFFFNGGREEVFENEERIIIPSPSVTTYDLVPEMSAYEITDTLIKKINLQKYSLIIINYANADMVGHTGNIEATKKAITTLDQCLGKILKCIHNTNYILVITADHGNAEEMFDVQNNMPYTAHTLNPVPFVVCNYPKKIKLKNGRLSDVAPTILEILNIKQPEEMTGISLIDTSN</sequence>
<comment type="function">
    <text evidence="1">Catalyzes the interconversion of 2-phosphoglycerate and 3-phosphoglycerate.</text>
</comment>
<comment type="catalytic activity">
    <reaction evidence="1">
        <text>(2R)-2-phosphoglycerate = (2R)-3-phosphoglycerate</text>
        <dbReference type="Rhea" id="RHEA:15901"/>
        <dbReference type="ChEBI" id="CHEBI:58272"/>
        <dbReference type="ChEBI" id="CHEBI:58289"/>
        <dbReference type="EC" id="5.4.2.12"/>
    </reaction>
</comment>
<comment type="cofactor">
    <cofactor evidence="1">
        <name>Mn(2+)</name>
        <dbReference type="ChEBI" id="CHEBI:29035"/>
    </cofactor>
    <text evidence="1">Binds 2 manganese ions per subunit.</text>
</comment>
<comment type="pathway">
    <text evidence="1">Carbohydrate degradation; glycolysis; pyruvate from D-glyceraldehyde 3-phosphate: step 3/5.</text>
</comment>
<comment type="subunit">
    <text evidence="1">Monomer.</text>
</comment>
<comment type="similarity">
    <text evidence="1">Belongs to the BPG-independent phosphoglycerate mutase family.</text>
</comment>
<name>GPMI_EHRRW</name>
<organism>
    <name type="scientific">Ehrlichia ruminantium (strain Welgevonden)</name>
    <dbReference type="NCBI Taxonomy" id="254945"/>
    <lineage>
        <taxon>Bacteria</taxon>
        <taxon>Pseudomonadati</taxon>
        <taxon>Pseudomonadota</taxon>
        <taxon>Alphaproteobacteria</taxon>
        <taxon>Rickettsiales</taxon>
        <taxon>Anaplasmataceae</taxon>
        <taxon>Ehrlichia</taxon>
    </lineage>
</organism>
<accession>Q5HB16</accession>
<accession>Q5FEM1</accession>
<evidence type="ECO:0000255" key="1">
    <source>
        <dbReference type="HAMAP-Rule" id="MF_01038"/>
    </source>
</evidence>
<gene>
    <name evidence="1" type="primary">gpmI</name>
    <name type="ordered locus">Erum5150</name>
    <name type="ordered locus">ERWE_CDS_05400</name>
</gene>
<dbReference type="EC" id="5.4.2.12" evidence="1"/>
<dbReference type="EMBL" id="CR767821">
    <property type="protein sequence ID" value="CAH58244.1"/>
    <property type="molecule type" value="Genomic_DNA"/>
</dbReference>
<dbReference type="EMBL" id="CR925678">
    <property type="protein sequence ID" value="CAI27034.1"/>
    <property type="molecule type" value="Genomic_DNA"/>
</dbReference>
<dbReference type="RefSeq" id="WP_011155195.1">
    <property type="nucleotide sequence ID" value="NC_005295.2"/>
</dbReference>
<dbReference type="SMR" id="Q5HB16"/>
<dbReference type="GeneID" id="33057842"/>
<dbReference type="KEGG" id="eru:Erum5150"/>
<dbReference type="KEGG" id="erw:ERWE_CDS_05400"/>
<dbReference type="eggNOG" id="COG0696">
    <property type="taxonomic scope" value="Bacteria"/>
</dbReference>
<dbReference type="HOGENOM" id="CLU_026099_2_0_5"/>
<dbReference type="UniPathway" id="UPA00109">
    <property type="reaction ID" value="UER00186"/>
</dbReference>
<dbReference type="Proteomes" id="UP000001021">
    <property type="component" value="Chromosome"/>
</dbReference>
<dbReference type="GO" id="GO:0005829">
    <property type="term" value="C:cytosol"/>
    <property type="evidence" value="ECO:0007669"/>
    <property type="project" value="TreeGrafter"/>
</dbReference>
<dbReference type="GO" id="GO:0030145">
    <property type="term" value="F:manganese ion binding"/>
    <property type="evidence" value="ECO:0007669"/>
    <property type="project" value="UniProtKB-UniRule"/>
</dbReference>
<dbReference type="GO" id="GO:0004619">
    <property type="term" value="F:phosphoglycerate mutase activity"/>
    <property type="evidence" value="ECO:0007669"/>
    <property type="project" value="UniProtKB-EC"/>
</dbReference>
<dbReference type="GO" id="GO:0006007">
    <property type="term" value="P:glucose catabolic process"/>
    <property type="evidence" value="ECO:0007669"/>
    <property type="project" value="InterPro"/>
</dbReference>
<dbReference type="GO" id="GO:0006096">
    <property type="term" value="P:glycolytic process"/>
    <property type="evidence" value="ECO:0007669"/>
    <property type="project" value="UniProtKB-UniRule"/>
</dbReference>
<dbReference type="CDD" id="cd16010">
    <property type="entry name" value="iPGM"/>
    <property type="match status" value="1"/>
</dbReference>
<dbReference type="FunFam" id="3.40.1450.10:FF:000002">
    <property type="entry name" value="2,3-bisphosphoglycerate-independent phosphoglycerate mutase"/>
    <property type="match status" value="1"/>
</dbReference>
<dbReference type="Gene3D" id="3.40.720.10">
    <property type="entry name" value="Alkaline Phosphatase, subunit A"/>
    <property type="match status" value="1"/>
</dbReference>
<dbReference type="Gene3D" id="3.40.1450.10">
    <property type="entry name" value="BPG-independent phosphoglycerate mutase, domain B"/>
    <property type="match status" value="1"/>
</dbReference>
<dbReference type="HAMAP" id="MF_01038">
    <property type="entry name" value="GpmI"/>
    <property type="match status" value="1"/>
</dbReference>
<dbReference type="InterPro" id="IPR017850">
    <property type="entry name" value="Alkaline_phosphatase_core_sf"/>
</dbReference>
<dbReference type="InterPro" id="IPR011258">
    <property type="entry name" value="BPG-indep_PGM_N"/>
</dbReference>
<dbReference type="InterPro" id="IPR006124">
    <property type="entry name" value="Metalloenzyme"/>
</dbReference>
<dbReference type="InterPro" id="IPR036646">
    <property type="entry name" value="PGAM_B_sf"/>
</dbReference>
<dbReference type="InterPro" id="IPR005995">
    <property type="entry name" value="Pgm_bpd_ind"/>
</dbReference>
<dbReference type="NCBIfam" id="TIGR01307">
    <property type="entry name" value="pgm_bpd_ind"/>
    <property type="match status" value="1"/>
</dbReference>
<dbReference type="PANTHER" id="PTHR31637">
    <property type="entry name" value="2,3-BISPHOSPHOGLYCERATE-INDEPENDENT PHOSPHOGLYCERATE MUTASE"/>
    <property type="match status" value="1"/>
</dbReference>
<dbReference type="PANTHER" id="PTHR31637:SF0">
    <property type="entry name" value="2,3-BISPHOSPHOGLYCERATE-INDEPENDENT PHOSPHOGLYCERATE MUTASE"/>
    <property type="match status" value="1"/>
</dbReference>
<dbReference type="Pfam" id="PF06415">
    <property type="entry name" value="iPGM_N"/>
    <property type="match status" value="1"/>
</dbReference>
<dbReference type="Pfam" id="PF01676">
    <property type="entry name" value="Metalloenzyme"/>
    <property type="match status" value="1"/>
</dbReference>
<dbReference type="PIRSF" id="PIRSF001492">
    <property type="entry name" value="IPGAM"/>
    <property type="match status" value="1"/>
</dbReference>
<dbReference type="SUPFAM" id="SSF64158">
    <property type="entry name" value="2,3-Bisphosphoglycerate-independent phosphoglycerate mutase, substrate-binding domain"/>
    <property type="match status" value="1"/>
</dbReference>
<dbReference type="SUPFAM" id="SSF53649">
    <property type="entry name" value="Alkaline phosphatase-like"/>
    <property type="match status" value="1"/>
</dbReference>
<keyword id="KW-0324">Glycolysis</keyword>
<keyword id="KW-0413">Isomerase</keyword>
<keyword id="KW-0464">Manganese</keyword>
<keyword id="KW-0479">Metal-binding</keyword>
<feature type="chain" id="PRO_0000212144" description="2,3-bisphosphoglycerate-independent phosphoglycerate mutase">
    <location>
        <begin position="1"/>
        <end position="501"/>
    </location>
</feature>
<feature type="active site" description="Phosphoserine intermediate" evidence="1">
    <location>
        <position position="62"/>
    </location>
</feature>
<feature type="binding site" evidence="1">
    <location>
        <position position="12"/>
    </location>
    <ligand>
        <name>Mn(2+)</name>
        <dbReference type="ChEBI" id="CHEBI:29035"/>
        <label>2</label>
    </ligand>
</feature>
<feature type="binding site" evidence="1">
    <location>
        <position position="62"/>
    </location>
    <ligand>
        <name>Mn(2+)</name>
        <dbReference type="ChEBI" id="CHEBI:29035"/>
        <label>2</label>
    </ligand>
</feature>
<feature type="binding site" evidence="1">
    <location>
        <position position="121"/>
    </location>
    <ligand>
        <name>substrate</name>
    </ligand>
</feature>
<feature type="binding site" evidence="1">
    <location>
        <begin position="150"/>
        <end position="151"/>
    </location>
    <ligand>
        <name>substrate</name>
    </ligand>
</feature>
<feature type="binding site" evidence="1">
    <location>
        <position position="182"/>
    </location>
    <ligand>
        <name>substrate</name>
    </ligand>
</feature>
<feature type="binding site" evidence="1">
    <location>
        <position position="188"/>
    </location>
    <ligand>
        <name>substrate</name>
    </ligand>
</feature>
<feature type="binding site" evidence="1">
    <location>
        <begin position="253"/>
        <end position="256"/>
    </location>
    <ligand>
        <name>substrate</name>
    </ligand>
</feature>
<feature type="binding site" evidence="1">
    <location>
        <position position="322"/>
    </location>
    <ligand>
        <name>substrate</name>
    </ligand>
</feature>
<feature type="binding site" evidence="1">
    <location>
        <position position="389"/>
    </location>
    <ligand>
        <name>Mn(2+)</name>
        <dbReference type="ChEBI" id="CHEBI:29035"/>
        <label>1</label>
    </ligand>
</feature>
<feature type="binding site" evidence="1">
    <location>
        <position position="393"/>
    </location>
    <ligand>
        <name>Mn(2+)</name>
        <dbReference type="ChEBI" id="CHEBI:29035"/>
        <label>1</label>
    </ligand>
</feature>
<feature type="binding site" evidence="1">
    <location>
        <position position="430"/>
    </location>
    <ligand>
        <name>Mn(2+)</name>
        <dbReference type="ChEBI" id="CHEBI:29035"/>
        <label>2</label>
    </ligand>
</feature>
<feature type="binding site" evidence="1">
    <location>
        <position position="431"/>
    </location>
    <ligand>
        <name>Mn(2+)</name>
        <dbReference type="ChEBI" id="CHEBI:29035"/>
        <label>2</label>
    </ligand>
</feature>
<feature type="binding site" evidence="1">
    <location>
        <position position="449"/>
    </location>
    <ligand>
        <name>Mn(2+)</name>
        <dbReference type="ChEBI" id="CHEBI:29035"/>
        <label>1</label>
    </ligand>
</feature>